<accession>Q7W2F2</accession>
<comment type="function">
    <text evidence="1">Protein S19 forms a complex with S13 that binds strongly to the 16S ribosomal RNA.</text>
</comment>
<comment type="similarity">
    <text evidence="1">Belongs to the universal ribosomal protein uS19 family.</text>
</comment>
<proteinExistence type="inferred from homology"/>
<name>RS19_BORPA</name>
<gene>
    <name evidence="1" type="primary">rpsS</name>
    <name type="ordered locus">BPP0033</name>
</gene>
<feature type="chain" id="PRO_0000129789" description="Small ribosomal subunit protein uS19">
    <location>
        <begin position="1"/>
        <end position="91"/>
    </location>
</feature>
<evidence type="ECO:0000255" key="1">
    <source>
        <dbReference type="HAMAP-Rule" id="MF_00531"/>
    </source>
</evidence>
<evidence type="ECO:0000305" key="2"/>
<organism>
    <name type="scientific">Bordetella parapertussis (strain 12822 / ATCC BAA-587 / NCTC 13253)</name>
    <dbReference type="NCBI Taxonomy" id="257311"/>
    <lineage>
        <taxon>Bacteria</taxon>
        <taxon>Pseudomonadati</taxon>
        <taxon>Pseudomonadota</taxon>
        <taxon>Betaproteobacteria</taxon>
        <taxon>Burkholderiales</taxon>
        <taxon>Alcaligenaceae</taxon>
        <taxon>Bordetella</taxon>
    </lineage>
</organism>
<dbReference type="EMBL" id="BX640423">
    <property type="protein sequence ID" value="CAE39774.1"/>
    <property type="molecule type" value="Genomic_DNA"/>
</dbReference>
<dbReference type="RefSeq" id="WP_003806908.1">
    <property type="nucleotide sequence ID" value="NC_002928.3"/>
</dbReference>
<dbReference type="SMR" id="Q7W2F2"/>
<dbReference type="GeneID" id="93206262"/>
<dbReference type="KEGG" id="bpa:BPP0033"/>
<dbReference type="HOGENOM" id="CLU_144911_0_1_4"/>
<dbReference type="Proteomes" id="UP000001421">
    <property type="component" value="Chromosome"/>
</dbReference>
<dbReference type="GO" id="GO:0005737">
    <property type="term" value="C:cytoplasm"/>
    <property type="evidence" value="ECO:0007669"/>
    <property type="project" value="UniProtKB-ARBA"/>
</dbReference>
<dbReference type="GO" id="GO:0015935">
    <property type="term" value="C:small ribosomal subunit"/>
    <property type="evidence" value="ECO:0007669"/>
    <property type="project" value="InterPro"/>
</dbReference>
<dbReference type="GO" id="GO:0019843">
    <property type="term" value="F:rRNA binding"/>
    <property type="evidence" value="ECO:0007669"/>
    <property type="project" value="UniProtKB-UniRule"/>
</dbReference>
<dbReference type="GO" id="GO:0003735">
    <property type="term" value="F:structural constituent of ribosome"/>
    <property type="evidence" value="ECO:0007669"/>
    <property type="project" value="InterPro"/>
</dbReference>
<dbReference type="GO" id="GO:0000028">
    <property type="term" value="P:ribosomal small subunit assembly"/>
    <property type="evidence" value="ECO:0007669"/>
    <property type="project" value="TreeGrafter"/>
</dbReference>
<dbReference type="GO" id="GO:0006412">
    <property type="term" value="P:translation"/>
    <property type="evidence" value="ECO:0007669"/>
    <property type="project" value="UniProtKB-UniRule"/>
</dbReference>
<dbReference type="FunFam" id="3.30.860.10:FF:000001">
    <property type="entry name" value="30S ribosomal protein S19"/>
    <property type="match status" value="1"/>
</dbReference>
<dbReference type="Gene3D" id="3.30.860.10">
    <property type="entry name" value="30s Ribosomal Protein S19, Chain A"/>
    <property type="match status" value="1"/>
</dbReference>
<dbReference type="HAMAP" id="MF_00531">
    <property type="entry name" value="Ribosomal_uS19"/>
    <property type="match status" value="1"/>
</dbReference>
<dbReference type="InterPro" id="IPR002222">
    <property type="entry name" value="Ribosomal_uS19"/>
</dbReference>
<dbReference type="InterPro" id="IPR005732">
    <property type="entry name" value="Ribosomal_uS19_bac-type"/>
</dbReference>
<dbReference type="InterPro" id="IPR020934">
    <property type="entry name" value="Ribosomal_uS19_CS"/>
</dbReference>
<dbReference type="InterPro" id="IPR023575">
    <property type="entry name" value="Ribosomal_uS19_SF"/>
</dbReference>
<dbReference type="NCBIfam" id="TIGR01050">
    <property type="entry name" value="rpsS_bact"/>
    <property type="match status" value="1"/>
</dbReference>
<dbReference type="PANTHER" id="PTHR11880">
    <property type="entry name" value="RIBOSOMAL PROTEIN S19P FAMILY MEMBER"/>
    <property type="match status" value="1"/>
</dbReference>
<dbReference type="PANTHER" id="PTHR11880:SF8">
    <property type="entry name" value="SMALL RIBOSOMAL SUBUNIT PROTEIN US19M"/>
    <property type="match status" value="1"/>
</dbReference>
<dbReference type="Pfam" id="PF00203">
    <property type="entry name" value="Ribosomal_S19"/>
    <property type="match status" value="1"/>
</dbReference>
<dbReference type="PIRSF" id="PIRSF002144">
    <property type="entry name" value="Ribosomal_S19"/>
    <property type="match status" value="1"/>
</dbReference>
<dbReference type="PRINTS" id="PR00975">
    <property type="entry name" value="RIBOSOMALS19"/>
</dbReference>
<dbReference type="SUPFAM" id="SSF54570">
    <property type="entry name" value="Ribosomal protein S19"/>
    <property type="match status" value="1"/>
</dbReference>
<dbReference type="PROSITE" id="PS00323">
    <property type="entry name" value="RIBOSOMAL_S19"/>
    <property type="match status" value="1"/>
</dbReference>
<keyword id="KW-0687">Ribonucleoprotein</keyword>
<keyword id="KW-0689">Ribosomal protein</keyword>
<keyword id="KW-0694">RNA-binding</keyword>
<keyword id="KW-0699">rRNA-binding</keyword>
<sequence>MSRSIKKGPFVDAHLIKKVDAAVAGKDKKPIKTWSRRSTVLPEFIGLTIAVHNGRQHVPVYINENMVGHKLGEFALTRTFKGHAADKKSKR</sequence>
<protein>
    <recommendedName>
        <fullName evidence="1">Small ribosomal subunit protein uS19</fullName>
    </recommendedName>
    <alternativeName>
        <fullName evidence="2">30S ribosomal protein S19</fullName>
    </alternativeName>
</protein>
<reference key="1">
    <citation type="journal article" date="2003" name="Nat. Genet.">
        <title>Comparative analysis of the genome sequences of Bordetella pertussis, Bordetella parapertussis and Bordetella bronchiseptica.</title>
        <authorList>
            <person name="Parkhill J."/>
            <person name="Sebaihia M."/>
            <person name="Preston A."/>
            <person name="Murphy L.D."/>
            <person name="Thomson N.R."/>
            <person name="Harris D.E."/>
            <person name="Holden M.T.G."/>
            <person name="Churcher C.M."/>
            <person name="Bentley S.D."/>
            <person name="Mungall K.L."/>
            <person name="Cerdeno-Tarraga A.-M."/>
            <person name="Temple L."/>
            <person name="James K.D."/>
            <person name="Harris B."/>
            <person name="Quail M.A."/>
            <person name="Achtman M."/>
            <person name="Atkin R."/>
            <person name="Baker S."/>
            <person name="Basham D."/>
            <person name="Bason N."/>
            <person name="Cherevach I."/>
            <person name="Chillingworth T."/>
            <person name="Collins M."/>
            <person name="Cronin A."/>
            <person name="Davis P."/>
            <person name="Doggett J."/>
            <person name="Feltwell T."/>
            <person name="Goble A."/>
            <person name="Hamlin N."/>
            <person name="Hauser H."/>
            <person name="Holroyd S."/>
            <person name="Jagels K."/>
            <person name="Leather S."/>
            <person name="Moule S."/>
            <person name="Norberczak H."/>
            <person name="O'Neil S."/>
            <person name="Ormond D."/>
            <person name="Price C."/>
            <person name="Rabbinowitsch E."/>
            <person name="Rutter S."/>
            <person name="Sanders M."/>
            <person name="Saunders D."/>
            <person name="Seeger K."/>
            <person name="Sharp S."/>
            <person name="Simmonds M."/>
            <person name="Skelton J."/>
            <person name="Squares R."/>
            <person name="Squares S."/>
            <person name="Stevens K."/>
            <person name="Unwin L."/>
            <person name="Whitehead S."/>
            <person name="Barrell B.G."/>
            <person name="Maskell D.J."/>
        </authorList>
    </citation>
    <scope>NUCLEOTIDE SEQUENCE [LARGE SCALE GENOMIC DNA]</scope>
    <source>
        <strain>12822 / ATCC BAA-587 / NCTC 13253</strain>
    </source>
</reference>